<protein>
    <recommendedName>
        <fullName evidence="1">Cyclic pyranopterin monophosphate synthase</fullName>
        <ecNumber evidence="1">4.6.1.17</ecNumber>
    </recommendedName>
    <alternativeName>
        <fullName evidence="1">Molybdenum cofactor biosynthesis protein C</fullName>
    </alternativeName>
</protein>
<evidence type="ECO:0000255" key="1">
    <source>
        <dbReference type="HAMAP-Rule" id="MF_01224"/>
    </source>
</evidence>
<gene>
    <name evidence="1" type="primary">moaC</name>
    <name type="ordered locus">SAS2164</name>
</gene>
<keyword id="KW-0456">Lyase</keyword>
<keyword id="KW-0501">Molybdenum cofactor biosynthesis</keyword>
<name>MOAC_STAAS</name>
<accession>Q6G748</accession>
<feature type="chain" id="PRO_0000097833" description="Cyclic pyranopterin monophosphate synthase">
    <location>
        <begin position="1"/>
        <end position="164"/>
    </location>
</feature>
<feature type="active site" evidence="1">
    <location>
        <position position="131"/>
    </location>
</feature>
<feature type="binding site" evidence="1">
    <location>
        <begin position="75"/>
        <end position="77"/>
    </location>
    <ligand>
        <name>substrate</name>
    </ligand>
</feature>
<feature type="binding site" evidence="1">
    <location>
        <begin position="116"/>
        <end position="117"/>
    </location>
    <ligand>
        <name>substrate</name>
    </ligand>
</feature>
<sequence length="164" mass="17693">MTEFTHINQQGHAKMVDVSDKQITKRTAVAHSSITVNKTIFKQISNNTNTKGNVLNTAQIAGIMAAKNTSTIIPMCHPLPLTGIDVHFSWDETNAPLYTLNIQTTVSTTGKTGVEMEALTAASATALTIYDMTKAVDKGMIIGETYLESKSGGKSGDFQRQSNQ</sequence>
<proteinExistence type="inferred from homology"/>
<comment type="function">
    <text evidence="1">Catalyzes the conversion of (8S)-3',8-cyclo-7,8-dihydroguanosine 5'-triphosphate to cyclic pyranopterin monophosphate (cPMP).</text>
</comment>
<comment type="catalytic activity">
    <reaction evidence="1">
        <text>(8S)-3',8-cyclo-7,8-dihydroguanosine 5'-triphosphate = cyclic pyranopterin phosphate + diphosphate</text>
        <dbReference type="Rhea" id="RHEA:49580"/>
        <dbReference type="ChEBI" id="CHEBI:33019"/>
        <dbReference type="ChEBI" id="CHEBI:59648"/>
        <dbReference type="ChEBI" id="CHEBI:131766"/>
        <dbReference type="EC" id="4.6.1.17"/>
    </reaction>
</comment>
<comment type="pathway">
    <text evidence="1">Cofactor biosynthesis; molybdopterin biosynthesis.</text>
</comment>
<comment type="subunit">
    <text evidence="1">Homohexamer; trimer of dimers.</text>
</comment>
<comment type="similarity">
    <text evidence="1">Belongs to the MoaC family.</text>
</comment>
<dbReference type="EC" id="4.6.1.17" evidence="1"/>
<dbReference type="EMBL" id="BX571857">
    <property type="protein sequence ID" value="CAG43975.1"/>
    <property type="molecule type" value="Genomic_DNA"/>
</dbReference>
<dbReference type="RefSeq" id="WP_000134536.1">
    <property type="nucleotide sequence ID" value="NC_002953.3"/>
</dbReference>
<dbReference type="SMR" id="Q6G748"/>
<dbReference type="KEGG" id="sas:SAS2164"/>
<dbReference type="HOGENOM" id="CLU_074693_1_1_9"/>
<dbReference type="UniPathway" id="UPA00344"/>
<dbReference type="GO" id="GO:0061799">
    <property type="term" value="F:cyclic pyranopterin monophosphate synthase activity"/>
    <property type="evidence" value="ECO:0007669"/>
    <property type="project" value="UniProtKB-UniRule"/>
</dbReference>
<dbReference type="GO" id="GO:0006777">
    <property type="term" value="P:Mo-molybdopterin cofactor biosynthetic process"/>
    <property type="evidence" value="ECO:0007669"/>
    <property type="project" value="UniProtKB-UniRule"/>
</dbReference>
<dbReference type="CDD" id="cd01420">
    <property type="entry name" value="MoaC_PE"/>
    <property type="match status" value="1"/>
</dbReference>
<dbReference type="Gene3D" id="3.30.70.640">
    <property type="entry name" value="Molybdopterin cofactor biosynthesis C (MoaC) domain"/>
    <property type="match status" value="1"/>
</dbReference>
<dbReference type="HAMAP" id="MF_01224_B">
    <property type="entry name" value="MoaC_B"/>
    <property type="match status" value="1"/>
</dbReference>
<dbReference type="InterPro" id="IPR023045">
    <property type="entry name" value="MoaC"/>
</dbReference>
<dbReference type="InterPro" id="IPR047594">
    <property type="entry name" value="MoaC_bact/euk"/>
</dbReference>
<dbReference type="InterPro" id="IPR036522">
    <property type="entry name" value="MoaC_sf"/>
</dbReference>
<dbReference type="InterPro" id="IPR050105">
    <property type="entry name" value="MoCo_biosynth_MoaA/MoaC"/>
</dbReference>
<dbReference type="InterPro" id="IPR002820">
    <property type="entry name" value="Mopterin_CF_biosynth-C_dom"/>
</dbReference>
<dbReference type="NCBIfam" id="TIGR00581">
    <property type="entry name" value="moaC"/>
    <property type="match status" value="1"/>
</dbReference>
<dbReference type="NCBIfam" id="NF006870">
    <property type="entry name" value="PRK09364.1"/>
    <property type="match status" value="1"/>
</dbReference>
<dbReference type="PANTHER" id="PTHR22960">
    <property type="entry name" value="MOLYBDOPTERIN COFACTOR SYNTHESIS PROTEIN A"/>
    <property type="match status" value="1"/>
</dbReference>
<dbReference type="Pfam" id="PF01967">
    <property type="entry name" value="MoaC"/>
    <property type="match status" value="1"/>
</dbReference>
<dbReference type="SUPFAM" id="SSF55040">
    <property type="entry name" value="Molybdenum cofactor biosynthesis protein C, MoaC"/>
    <property type="match status" value="1"/>
</dbReference>
<organism>
    <name type="scientific">Staphylococcus aureus (strain MSSA476)</name>
    <dbReference type="NCBI Taxonomy" id="282459"/>
    <lineage>
        <taxon>Bacteria</taxon>
        <taxon>Bacillati</taxon>
        <taxon>Bacillota</taxon>
        <taxon>Bacilli</taxon>
        <taxon>Bacillales</taxon>
        <taxon>Staphylococcaceae</taxon>
        <taxon>Staphylococcus</taxon>
    </lineage>
</organism>
<reference key="1">
    <citation type="journal article" date="2004" name="Proc. Natl. Acad. Sci. U.S.A.">
        <title>Complete genomes of two clinical Staphylococcus aureus strains: evidence for the rapid evolution of virulence and drug resistance.</title>
        <authorList>
            <person name="Holden M.T.G."/>
            <person name="Feil E.J."/>
            <person name="Lindsay J.A."/>
            <person name="Peacock S.J."/>
            <person name="Day N.P.J."/>
            <person name="Enright M.C."/>
            <person name="Foster T.J."/>
            <person name="Moore C.E."/>
            <person name="Hurst L."/>
            <person name="Atkin R."/>
            <person name="Barron A."/>
            <person name="Bason N."/>
            <person name="Bentley S.D."/>
            <person name="Chillingworth C."/>
            <person name="Chillingworth T."/>
            <person name="Churcher C."/>
            <person name="Clark L."/>
            <person name="Corton C."/>
            <person name="Cronin A."/>
            <person name="Doggett J."/>
            <person name="Dowd L."/>
            <person name="Feltwell T."/>
            <person name="Hance Z."/>
            <person name="Harris B."/>
            <person name="Hauser H."/>
            <person name="Holroyd S."/>
            <person name="Jagels K."/>
            <person name="James K.D."/>
            <person name="Lennard N."/>
            <person name="Line A."/>
            <person name="Mayes R."/>
            <person name="Moule S."/>
            <person name="Mungall K."/>
            <person name="Ormond D."/>
            <person name="Quail M.A."/>
            <person name="Rabbinowitsch E."/>
            <person name="Rutherford K.M."/>
            <person name="Sanders M."/>
            <person name="Sharp S."/>
            <person name="Simmonds M."/>
            <person name="Stevens K."/>
            <person name="Whitehead S."/>
            <person name="Barrell B.G."/>
            <person name="Spratt B.G."/>
            <person name="Parkhill J."/>
        </authorList>
    </citation>
    <scope>NUCLEOTIDE SEQUENCE [LARGE SCALE GENOMIC DNA]</scope>
    <source>
        <strain>MSSA476</strain>
    </source>
</reference>